<sequence length="196" mass="21769">MVGGLKRKHSDLEEEEERWEWSPAGLQSYQQALLRISLDKVQRSLGPRAPSLRRHVLIHNTLQQLQAALRLAPAPALPPEPLFLGEEDFSLSATIGSILRELDTSMDGTEPPQNPVTPLGLQNEVPPQPDPVFLEALSSRYLGDSGLDDFFLDIDTSAVEKEPARAPPEPPHNLFCAPGSWEWNELDHIMEIILGS</sequence>
<evidence type="ECO:0000250" key="1">
    <source>
        <dbReference type="UniProtKB" id="Q9ERC3"/>
    </source>
</evidence>
<evidence type="ECO:0000255" key="2">
    <source>
        <dbReference type="PROSITE-ProRule" id="PRU00396"/>
    </source>
</evidence>
<evidence type="ECO:0000256" key="3">
    <source>
        <dbReference type="SAM" id="MobiDB-lite"/>
    </source>
</evidence>
<evidence type="ECO:0000269" key="4">
    <source>
    </source>
</evidence>
<evidence type="ECO:0000269" key="5">
    <source>
    </source>
</evidence>
<evidence type="ECO:0000269" key="6">
    <source>
    </source>
</evidence>
<evidence type="ECO:0000305" key="7"/>
<dbReference type="EMBL" id="AF192529">
    <property type="protein sequence ID" value="AAF05761.1"/>
    <property type="molecule type" value="mRNA"/>
</dbReference>
<dbReference type="EMBL" id="AK074604">
    <property type="protein sequence ID" value="BAG51975.1"/>
    <property type="molecule type" value="mRNA"/>
</dbReference>
<dbReference type="EMBL" id="CH471126">
    <property type="protein sequence ID" value="EAW56966.1"/>
    <property type="molecule type" value="Genomic_DNA"/>
</dbReference>
<dbReference type="EMBL" id="BC014061">
    <property type="protein sequence ID" value="AAH14061.1"/>
    <property type="molecule type" value="mRNA"/>
</dbReference>
<dbReference type="EMBL" id="BC050643">
    <property type="protein sequence ID" value="AAH50643.1"/>
    <property type="molecule type" value="mRNA"/>
</dbReference>
<dbReference type="CCDS" id="CCDS12558.1"/>
<dbReference type="RefSeq" id="NP_037500.2">
    <property type="nucleotide sequence ID" value="NM_013368.3"/>
</dbReference>
<dbReference type="RefSeq" id="NP_976219.1">
    <property type="nucleotide sequence ID" value="NM_203344.3"/>
</dbReference>
<dbReference type="RefSeq" id="XP_005258889.1">
    <property type="nucleotide sequence ID" value="XM_005258832.3"/>
</dbReference>
<dbReference type="RefSeq" id="XP_006723242.1">
    <property type="nucleotide sequence ID" value="XM_006723179.4"/>
</dbReference>
<dbReference type="RefSeq" id="XP_047294674.1">
    <property type="nucleotide sequence ID" value="XM_047438718.1"/>
</dbReference>
<dbReference type="RefSeq" id="XP_054176748.1">
    <property type="nucleotide sequence ID" value="XM_054320773.1"/>
</dbReference>
<dbReference type="RefSeq" id="XP_054176749.1">
    <property type="nucleotide sequence ID" value="XM_054320774.1"/>
</dbReference>
<dbReference type="BioGRID" id="118983">
    <property type="interactions" value="47"/>
</dbReference>
<dbReference type="FunCoup" id="Q9UJW9">
    <property type="interactions" value="767"/>
</dbReference>
<dbReference type="IntAct" id="Q9UJW9">
    <property type="interactions" value="68"/>
</dbReference>
<dbReference type="STRING" id="9606.ENSP00000375882"/>
<dbReference type="iPTMnet" id="Q9UJW9"/>
<dbReference type="PhosphoSitePlus" id="Q9UJW9"/>
<dbReference type="BioMuta" id="SERTAD3"/>
<dbReference type="DMDM" id="60415943"/>
<dbReference type="PaxDb" id="9606-ENSP00000325414"/>
<dbReference type="PeptideAtlas" id="Q9UJW9"/>
<dbReference type="Antibodypedia" id="55379">
    <property type="antibodies" value="54 antibodies from 15 providers"/>
</dbReference>
<dbReference type="DNASU" id="29946"/>
<dbReference type="Ensembl" id="ENST00000322354.4">
    <property type="protein sequence ID" value="ENSP00000325414.2"/>
    <property type="gene ID" value="ENSG00000167565.13"/>
</dbReference>
<dbReference type="Ensembl" id="ENST00000392028.8">
    <property type="protein sequence ID" value="ENSP00000375882.3"/>
    <property type="gene ID" value="ENSG00000167565.13"/>
</dbReference>
<dbReference type="GeneID" id="29946"/>
<dbReference type="KEGG" id="hsa:29946"/>
<dbReference type="MANE-Select" id="ENST00000322354.4">
    <property type="protein sequence ID" value="ENSP00000325414.2"/>
    <property type="RefSeq nucleotide sequence ID" value="NM_203344.3"/>
    <property type="RefSeq protein sequence ID" value="NP_976219.1"/>
</dbReference>
<dbReference type="UCSC" id="uc002onu.5">
    <property type="organism name" value="human"/>
</dbReference>
<dbReference type="AGR" id="HGNC:17931"/>
<dbReference type="CTD" id="29946"/>
<dbReference type="DisGeNET" id="29946"/>
<dbReference type="GeneCards" id="SERTAD3"/>
<dbReference type="HGNC" id="HGNC:17931">
    <property type="gene designation" value="SERTAD3"/>
</dbReference>
<dbReference type="HPA" id="ENSG00000167565">
    <property type="expression patterns" value="Low tissue specificity"/>
</dbReference>
<dbReference type="MIM" id="612125">
    <property type="type" value="gene"/>
</dbReference>
<dbReference type="neXtProt" id="NX_Q9UJW9"/>
<dbReference type="OpenTargets" id="ENSG00000167565"/>
<dbReference type="PharmGKB" id="PA134941720"/>
<dbReference type="VEuPathDB" id="HostDB:ENSG00000167565"/>
<dbReference type="eggNOG" id="ENOG502RY30">
    <property type="taxonomic scope" value="Eukaryota"/>
</dbReference>
<dbReference type="GeneTree" id="ENSGT00940000154733"/>
<dbReference type="HOGENOM" id="CLU_097197_0_0_1"/>
<dbReference type="InParanoid" id="Q9UJW9"/>
<dbReference type="OMA" id="DWGSAES"/>
<dbReference type="OrthoDB" id="8735401at2759"/>
<dbReference type="PAN-GO" id="Q9UJW9">
    <property type="GO annotations" value="2 GO annotations based on evolutionary models"/>
</dbReference>
<dbReference type="PhylomeDB" id="Q9UJW9"/>
<dbReference type="TreeFam" id="TF101069"/>
<dbReference type="PathwayCommons" id="Q9UJW9"/>
<dbReference type="SignaLink" id="Q9UJW9"/>
<dbReference type="BioGRID-ORCS" id="29946">
    <property type="hits" value="16 hits in 1164 CRISPR screens"/>
</dbReference>
<dbReference type="GenomeRNAi" id="29946"/>
<dbReference type="Pharos" id="Q9UJW9">
    <property type="development level" value="Tbio"/>
</dbReference>
<dbReference type="PRO" id="PR:Q9UJW9"/>
<dbReference type="Proteomes" id="UP000005640">
    <property type="component" value="Chromosome 19"/>
</dbReference>
<dbReference type="RNAct" id="Q9UJW9">
    <property type="molecule type" value="protein"/>
</dbReference>
<dbReference type="Bgee" id="ENSG00000167565">
    <property type="expression patterns" value="Expressed in oocyte and 154 other cell types or tissues"/>
</dbReference>
<dbReference type="ExpressionAtlas" id="Q9UJW9">
    <property type="expression patterns" value="baseline and differential"/>
</dbReference>
<dbReference type="GO" id="GO:0005634">
    <property type="term" value="C:nucleus"/>
    <property type="evidence" value="ECO:0000314"/>
    <property type="project" value="UniProtKB"/>
</dbReference>
<dbReference type="GO" id="GO:0030308">
    <property type="term" value="P:negative regulation of cell growth"/>
    <property type="evidence" value="ECO:0000314"/>
    <property type="project" value="MGI"/>
</dbReference>
<dbReference type="GO" id="GO:0045893">
    <property type="term" value="P:positive regulation of DNA-templated transcription"/>
    <property type="evidence" value="ECO:0000318"/>
    <property type="project" value="GO_Central"/>
</dbReference>
<dbReference type="GO" id="GO:0006355">
    <property type="term" value="P:regulation of DNA-templated transcription"/>
    <property type="evidence" value="ECO:0000314"/>
    <property type="project" value="UniProtKB"/>
</dbReference>
<dbReference type="InterPro" id="IPR009263">
    <property type="entry name" value="SERTA_dom"/>
</dbReference>
<dbReference type="InterPro" id="IPR039585">
    <property type="entry name" value="SERTAD3"/>
</dbReference>
<dbReference type="PANTHER" id="PTHR15530">
    <property type="entry name" value="SERTA DOMAIN-CONTAINING PROTEIN 3"/>
    <property type="match status" value="1"/>
</dbReference>
<dbReference type="PANTHER" id="PTHR15530:SF0">
    <property type="entry name" value="SERTA DOMAIN-CONTAINING PROTEIN 3"/>
    <property type="match status" value="1"/>
</dbReference>
<dbReference type="Pfam" id="PF06031">
    <property type="entry name" value="SERTA"/>
    <property type="match status" value="1"/>
</dbReference>
<dbReference type="PROSITE" id="PS51053">
    <property type="entry name" value="SERTA"/>
    <property type="match status" value="1"/>
</dbReference>
<keyword id="KW-0010">Activator</keyword>
<keyword id="KW-0539">Nucleus</keyword>
<keyword id="KW-1267">Proteomics identification</keyword>
<keyword id="KW-1185">Reference proteome</keyword>
<keyword id="KW-0804">Transcription</keyword>
<keyword id="KW-0805">Transcription regulation</keyword>
<feature type="chain" id="PRO_0000191615" description="SERTA domain-containing protein 3">
    <location>
        <begin position="1"/>
        <end position="196"/>
    </location>
</feature>
<feature type="domain" description="SERTA" evidence="2">
    <location>
        <begin position="26"/>
        <end position="73"/>
    </location>
</feature>
<feature type="region of interest" description="Disordered" evidence="3">
    <location>
        <begin position="1"/>
        <end position="21"/>
    </location>
</feature>
<feature type="region of interest" description="Disordered" evidence="3">
    <location>
        <begin position="104"/>
        <end position="125"/>
    </location>
</feature>
<feature type="sequence conflict" description="In Ref. 1; AAF05761." evidence="7" ref="1">
    <original>V</original>
    <variation>E</variation>
    <location>
        <position position="2"/>
    </location>
</feature>
<reference key="1">
    <citation type="journal article" date="2000" name="Nucleic Acids Res.">
        <title>RBT1, a novel transcriptional co-activator, binds the second subunit of replication protein A.</title>
        <authorList>
            <person name="Cho J.M."/>
            <person name="Song D.J."/>
            <person name="Bergeron J."/>
            <person name="Benlimame N."/>
            <person name="Wold M.S."/>
            <person name="Alaoui-Jamali M.A."/>
        </authorList>
    </citation>
    <scope>NUCLEOTIDE SEQUENCE [MRNA]</scope>
    <scope>FUNCTION</scope>
    <scope>SUBCELLULAR LOCATION</scope>
    <scope>INTERACTION WITH RPA2</scope>
</reference>
<reference key="2">
    <citation type="journal article" date="2004" name="Nat. Genet.">
        <title>Complete sequencing and characterization of 21,243 full-length human cDNAs.</title>
        <authorList>
            <person name="Ota T."/>
            <person name="Suzuki Y."/>
            <person name="Nishikawa T."/>
            <person name="Otsuki T."/>
            <person name="Sugiyama T."/>
            <person name="Irie R."/>
            <person name="Wakamatsu A."/>
            <person name="Hayashi K."/>
            <person name="Sato H."/>
            <person name="Nagai K."/>
            <person name="Kimura K."/>
            <person name="Makita H."/>
            <person name="Sekine M."/>
            <person name="Obayashi M."/>
            <person name="Nishi T."/>
            <person name="Shibahara T."/>
            <person name="Tanaka T."/>
            <person name="Ishii S."/>
            <person name="Yamamoto J."/>
            <person name="Saito K."/>
            <person name="Kawai Y."/>
            <person name="Isono Y."/>
            <person name="Nakamura Y."/>
            <person name="Nagahari K."/>
            <person name="Murakami K."/>
            <person name="Yasuda T."/>
            <person name="Iwayanagi T."/>
            <person name="Wagatsuma M."/>
            <person name="Shiratori A."/>
            <person name="Sudo H."/>
            <person name="Hosoiri T."/>
            <person name="Kaku Y."/>
            <person name="Kodaira H."/>
            <person name="Kondo H."/>
            <person name="Sugawara M."/>
            <person name="Takahashi M."/>
            <person name="Kanda K."/>
            <person name="Yokoi T."/>
            <person name="Furuya T."/>
            <person name="Kikkawa E."/>
            <person name="Omura Y."/>
            <person name="Abe K."/>
            <person name="Kamihara K."/>
            <person name="Katsuta N."/>
            <person name="Sato K."/>
            <person name="Tanikawa M."/>
            <person name="Yamazaki M."/>
            <person name="Ninomiya K."/>
            <person name="Ishibashi T."/>
            <person name="Yamashita H."/>
            <person name="Murakawa K."/>
            <person name="Fujimori K."/>
            <person name="Tanai H."/>
            <person name="Kimata M."/>
            <person name="Watanabe M."/>
            <person name="Hiraoka S."/>
            <person name="Chiba Y."/>
            <person name="Ishida S."/>
            <person name="Ono Y."/>
            <person name="Takiguchi S."/>
            <person name="Watanabe S."/>
            <person name="Yosida M."/>
            <person name="Hotuta T."/>
            <person name="Kusano J."/>
            <person name="Kanehori K."/>
            <person name="Takahashi-Fujii A."/>
            <person name="Hara H."/>
            <person name="Tanase T.-O."/>
            <person name="Nomura Y."/>
            <person name="Togiya S."/>
            <person name="Komai F."/>
            <person name="Hara R."/>
            <person name="Takeuchi K."/>
            <person name="Arita M."/>
            <person name="Imose N."/>
            <person name="Musashino K."/>
            <person name="Yuuki H."/>
            <person name="Oshima A."/>
            <person name="Sasaki N."/>
            <person name="Aotsuka S."/>
            <person name="Yoshikawa Y."/>
            <person name="Matsunawa H."/>
            <person name="Ichihara T."/>
            <person name="Shiohata N."/>
            <person name="Sano S."/>
            <person name="Moriya S."/>
            <person name="Momiyama H."/>
            <person name="Satoh N."/>
            <person name="Takami S."/>
            <person name="Terashima Y."/>
            <person name="Suzuki O."/>
            <person name="Nakagawa S."/>
            <person name="Senoh A."/>
            <person name="Mizoguchi H."/>
            <person name="Goto Y."/>
            <person name="Shimizu F."/>
            <person name="Wakebe H."/>
            <person name="Hishigaki H."/>
            <person name="Watanabe T."/>
            <person name="Sugiyama A."/>
            <person name="Takemoto M."/>
            <person name="Kawakami B."/>
            <person name="Yamazaki M."/>
            <person name="Watanabe K."/>
            <person name="Kumagai A."/>
            <person name="Itakura S."/>
            <person name="Fukuzumi Y."/>
            <person name="Fujimori Y."/>
            <person name="Komiyama M."/>
            <person name="Tashiro H."/>
            <person name="Tanigami A."/>
            <person name="Fujiwara T."/>
            <person name="Ono T."/>
            <person name="Yamada K."/>
            <person name="Fujii Y."/>
            <person name="Ozaki K."/>
            <person name="Hirao M."/>
            <person name="Ohmori Y."/>
            <person name="Kawabata A."/>
            <person name="Hikiji T."/>
            <person name="Kobatake N."/>
            <person name="Inagaki H."/>
            <person name="Ikema Y."/>
            <person name="Okamoto S."/>
            <person name="Okitani R."/>
            <person name="Kawakami T."/>
            <person name="Noguchi S."/>
            <person name="Itoh T."/>
            <person name="Shigeta K."/>
            <person name="Senba T."/>
            <person name="Matsumura K."/>
            <person name="Nakajima Y."/>
            <person name="Mizuno T."/>
            <person name="Morinaga M."/>
            <person name="Sasaki M."/>
            <person name="Togashi T."/>
            <person name="Oyama M."/>
            <person name="Hata H."/>
            <person name="Watanabe M."/>
            <person name="Komatsu T."/>
            <person name="Mizushima-Sugano J."/>
            <person name="Satoh T."/>
            <person name="Shirai Y."/>
            <person name="Takahashi Y."/>
            <person name="Nakagawa K."/>
            <person name="Okumura K."/>
            <person name="Nagase T."/>
            <person name="Nomura N."/>
            <person name="Kikuchi H."/>
            <person name="Masuho Y."/>
            <person name="Yamashita R."/>
            <person name="Nakai K."/>
            <person name="Yada T."/>
            <person name="Nakamura Y."/>
            <person name="Ohara O."/>
            <person name="Isogai T."/>
            <person name="Sugano S."/>
        </authorList>
    </citation>
    <scope>NUCLEOTIDE SEQUENCE [LARGE SCALE MRNA]</scope>
    <source>
        <tissue>Embryo</tissue>
    </source>
</reference>
<reference key="3">
    <citation type="submission" date="2005-07" db="EMBL/GenBank/DDBJ databases">
        <authorList>
            <person name="Mural R.J."/>
            <person name="Istrail S."/>
            <person name="Sutton G.G."/>
            <person name="Florea L."/>
            <person name="Halpern A.L."/>
            <person name="Mobarry C.M."/>
            <person name="Lippert R."/>
            <person name="Walenz B."/>
            <person name="Shatkay H."/>
            <person name="Dew I."/>
            <person name="Miller J.R."/>
            <person name="Flanigan M.J."/>
            <person name="Edwards N.J."/>
            <person name="Bolanos R."/>
            <person name="Fasulo D."/>
            <person name="Halldorsson B.V."/>
            <person name="Hannenhalli S."/>
            <person name="Turner R."/>
            <person name="Yooseph S."/>
            <person name="Lu F."/>
            <person name="Nusskern D.R."/>
            <person name="Shue B.C."/>
            <person name="Zheng X.H."/>
            <person name="Zhong F."/>
            <person name="Delcher A.L."/>
            <person name="Huson D.H."/>
            <person name="Kravitz S.A."/>
            <person name="Mouchard L."/>
            <person name="Reinert K."/>
            <person name="Remington K.A."/>
            <person name="Clark A.G."/>
            <person name="Waterman M.S."/>
            <person name="Eichler E.E."/>
            <person name="Adams M.D."/>
            <person name="Hunkapiller M.W."/>
            <person name="Myers E.W."/>
            <person name="Venter J.C."/>
        </authorList>
    </citation>
    <scope>NUCLEOTIDE SEQUENCE [LARGE SCALE GENOMIC DNA]</scope>
</reference>
<reference key="4">
    <citation type="journal article" date="2004" name="Genome Res.">
        <title>The status, quality, and expansion of the NIH full-length cDNA project: the Mammalian Gene Collection (MGC).</title>
        <authorList>
            <consortium name="The MGC Project Team"/>
        </authorList>
    </citation>
    <scope>NUCLEOTIDE SEQUENCE [LARGE SCALE MRNA]</scope>
    <source>
        <tissue>Ovary</tissue>
        <tissue>Uterus</tissue>
    </source>
</reference>
<reference key="5">
    <citation type="journal article" date="2020" name="Cell Rep.">
        <title>Type-IInterferon-Inducible SERTAD3 Inhibits Influenza A Virus Replication by Blocking the Assembly of Viral RNA Polymerase Complex.</title>
        <authorList>
            <person name="Sun N."/>
            <person name="Li C."/>
            <person name="Li X.F."/>
            <person name="Deng Y.Q."/>
            <person name="Jiang T."/>
            <person name="Zhang N.N."/>
            <person name="Zu S."/>
            <person name="Zhang R.R."/>
            <person name="Li L."/>
            <person name="Chen X."/>
            <person name="Liu P."/>
            <person name="Gold S."/>
            <person name="Lu N."/>
            <person name="Du P."/>
            <person name="Wang J."/>
            <person name="Qin C.F."/>
            <person name="Cheng G."/>
        </authorList>
    </citation>
    <scope>FUNCTION</scope>
    <scope>INDUCTION BY TYPE I INTERFERON</scope>
    <scope>SUBCELLULAR LOCATION</scope>
    <scope>INTERACTION WITH INFLUENZA VIRUS PROTEINS PA; PB1 AND PB2 (MICROBIAL INFECTION)</scope>
</reference>
<reference key="6">
    <citation type="journal article" date="2023" name="J. Med. Virol.">
        <title>SERTAD3 induces proteasomal degradation of ZIKV capsid protein and represents a therapeutic target.</title>
        <authorList>
            <person name="Sun N."/>
            <person name="Zhang R.R."/>
            <person name="Song G.Y."/>
            <person name="Cai Q."/>
            <person name="Aliyari S.R."/>
            <person name="Nielsen-Saines K."/>
            <person name="Jung J.U."/>
            <person name="Yang H."/>
            <person name="Cheng G."/>
            <person name="Qin C.F."/>
        </authorList>
    </citation>
    <scope>FUNCTION</scope>
    <scope>SUBCELLULAR LOCATION</scope>
    <scope>INTERACTION WITH ZIKA VIRUS CAPSID PROTEIN (MICROBIAL INFECTION)</scope>
    <scope>INDUCTION BY ZIKA VIRUS INFECTION</scope>
</reference>
<comment type="function">
    <text evidence="1 4 5 6">Antiviral interferon-stimulated protein that plays a role in innate immunity and in the suppression of viruses through different mechanisms (PubMed:33147462, PubMed:36594413). Plays a role in the late phase response of TLR-induced immune effector expression (By similarity). During influenza infection, interacts with PB2, PB1, and PA to disrupt the formation of the viral RdRp complex (PubMed:33147462). Inhibits zika virus by interacting with the capsid protein in the nucleolus and reducing its abundance through proteasomal degradation (PubMed:36594413). Strong transcriptional coactivator (PubMed:10982866).</text>
</comment>
<comment type="subunit">
    <text evidence="4">Interacts with RPA2.</text>
</comment>
<comment type="subunit">
    <text evidence="5">(Microbial infection) Interacts with influenza virus PA, PB1 and PB2,leading to inhibition of RdRp complex assembly.</text>
</comment>
<comment type="subunit">
    <text evidence="6">(Microbial infection) Interacts with zika virus capsid protein.</text>
</comment>
<comment type="interaction">
    <interactant intactId="EBI-748621">
        <id>Q9UJW9</id>
    </interactant>
    <interactant intactId="EBI-17183751">
        <id>X5D778</id>
        <label>ANKRD11</label>
    </interactant>
    <organismsDiffer>false</organismsDiffer>
    <experiments>3</experiments>
</comment>
<comment type="interaction">
    <interactant intactId="EBI-748621">
        <id>Q9UJW9</id>
    </interactant>
    <interactant intactId="EBI-745073">
        <id>Q9BXY8</id>
        <label>BEX2</label>
    </interactant>
    <organismsDiffer>false</organismsDiffer>
    <experiments>3</experiments>
</comment>
<comment type="interaction">
    <interactant intactId="EBI-748621">
        <id>Q9UJW9</id>
    </interactant>
    <interactant intactId="EBI-10229433">
        <id>Q13515</id>
        <label>BFSP2</label>
    </interactant>
    <organismsDiffer>false</organismsDiffer>
    <experiments>3</experiments>
</comment>
<comment type="interaction">
    <interactant intactId="EBI-748621">
        <id>Q9UJW9</id>
    </interactant>
    <interactant intactId="EBI-747505">
        <id>Q8TAB5</id>
        <label>C1orf216</label>
    </interactant>
    <organismsDiffer>false</organismsDiffer>
    <experiments>3</experiments>
</comment>
<comment type="interaction">
    <interactant intactId="EBI-748621">
        <id>Q9UJW9</id>
    </interactant>
    <interactant intactId="EBI-395261">
        <id>P24863</id>
        <label>CCNC</label>
    </interactant>
    <organismsDiffer>false</organismsDiffer>
    <experiments>3</experiments>
</comment>
<comment type="interaction">
    <interactant intactId="EBI-748621">
        <id>Q9UJW9</id>
    </interactant>
    <interactant intactId="EBI-10250303">
        <id>Q6IPU0</id>
        <label>CENPP</label>
    </interactant>
    <organismsDiffer>false</organismsDiffer>
    <experiments>3</experiments>
</comment>
<comment type="interaction">
    <interactant intactId="EBI-748621">
        <id>Q9UJW9</id>
    </interactant>
    <interactant intactId="EBI-741885">
        <id>Q96LK0</id>
        <label>CEP19</label>
    </interactant>
    <organismsDiffer>false</organismsDiffer>
    <experiments>3</experiments>
</comment>
<comment type="interaction">
    <interactant intactId="EBI-748621">
        <id>Q9UJW9</id>
    </interactant>
    <interactant intactId="EBI-11962928">
        <id>Q9UI47-2</id>
        <label>CTNNA3</label>
    </interactant>
    <organismsDiffer>false</organismsDiffer>
    <experiments>3</experiments>
</comment>
<comment type="interaction">
    <interactant intactId="EBI-748621">
        <id>Q9UJW9</id>
    </interactant>
    <interactant intactId="EBI-514206">
        <id>Q9UBT7</id>
        <label>CTNNAL1</label>
    </interactant>
    <organismsDiffer>false</organismsDiffer>
    <experiments>3</experiments>
</comment>
<comment type="interaction">
    <interactant intactId="EBI-748621">
        <id>Q9UJW9</id>
    </interactant>
    <interactant intactId="EBI-77321">
        <id>Q9UER7</id>
        <label>DAXX</label>
    </interactant>
    <organismsDiffer>false</organismsDiffer>
    <experiments>3</experiments>
</comment>
<comment type="interaction">
    <interactant intactId="EBI-748621">
        <id>Q9UJW9</id>
    </interactant>
    <interactant intactId="EBI-12082590">
        <id>Q6W0C5</id>
        <label>DPPA3</label>
    </interactant>
    <organismsDiffer>false</organismsDiffer>
    <experiments>3</experiments>
</comment>
<comment type="interaction">
    <interactant intactId="EBI-748621">
        <id>Q9UJW9</id>
    </interactant>
    <interactant intactId="EBI-744099">
        <id>Q9H0I2</id>
        <label>ENKD1</label>
    </interactant>
    <organismsDiffer>false</organismsDiffer>
    <experiments>3</experiments>
</comment>
<comment type="interaction">
    <interactant intactId="EBI-748621">
        <id>Q9UJW9</id>
    </interactant>
    <interactant intactId="EBI-12013806">
        <id>Q6NZ36-4</id>
        <label>FAAP20</label>
    </interactant>
    <organismsDiffer>false</organismsDiffer>
    <experiments>3</experiments>
</comment>
<comment type="interaction">
    <interactant intactId="EBI-748621">
        <id>Q9UJW9</id>
    </interactant>
    <interactant intactId="EBI-2322644">
        <id>Q9H4M3</id>
        <label>FBXO44</label>
    </interactant>
    <organismsDiffer>false</organismsDiffer>
    <experiments>3</experiments>
</comment>
<comment type="interaction">
    <interactant intactId="EBI-748621">
        <id>Q9UJW9</id>
    </interactant>
    <interactant intactId="EBI-11958845">
        <id>O94868-3</id>
        <label>FCHSD2</label>
    </interactant>
    <organismsDiffer>false</organismsDiffer>
    <experiments>3</experiments>
</comment>
<comment type="interaction">
    <interactant intactId="EBI-748621">
        <id>Q9UJW9</id>
    </interactant>
    <interactant intactId="EBI-740290">
        <id>Q969Y2</id>
        <label>GTPBP3</label>
    </interactant>
    <organismsDiffer>false</organismsDiffer>
    <experiments>3</experiments>
</comment>
<comment type="interaction">
    <interactant intactId="EBI-748621">
        <id>Q9UJW9</id>
    </interactant>
    <interactant intactId="EBI-10329202">
        <id>Q9Y5R4</id>
        <label>HEMK1</label>
    </interactant>
    <organismsDiffer>false</organismsDiffer>
    <experiments>3</experiments>
</comment>
<comment type="interaction">
    <interactant intactId="EBI-748621">
        <id>Q9UJW9</id>
    </interactant>
    <interactant intactId="EBI-740220">
        <id>O14964</id>
        <label>HGS</label>
    </interactant>
    <organismsDiffer>false</organismsDiffer>
    <experiments>3</experiments>
</comment>
<comment type="interaction">
    <interactant intactId="EBI-748621">
        <id>Q9UJW9</id>
    </interactant>
    <interactant intactId="EBI-17178971">
        <id>Q14005-2</id>
        <label>IL16</label>
    </interactant>
    <organismsDiffer>false</organismsDiffer>
    <experiments>3</experiments>
</comment>
<comment type="interaction">
    <interactant intactId="EBI-748621">
        <id>Q9UJW9</id>
    </interactant>
    <interactant intactId="EBI-747481">
        <id>Q9NV31</id>
        <label>IMP3</label>
    </interactant>
    <organismsDiffer>false</organismsDiffer>
    <experiments>3</experiments>
</comment>
<comment type="interaction">
    <interactant intactId="EBI-748621">
        <id>Q9UJW9</id>
    </interactant>
    <interactant intactId="EBI-2556193">
        <id>Q63ZY3</id>
        <label>KANK2</label>
    </interactant>
    <organismsDiffer>false</organismsDiffer>
    <experiments>3</experiments>
</comment>
<comment type="interaction">
    <interactant intactId="EBI-748621">
        <id>Q9UJW9</id>
    </interactant>
    <interactant intactId="EBI-739890">
        <id>Q9P2K6</id>
        <label>KLHL42</label>
    </interactant>
    <organismsDiffer>false</organismsDiffer>
    <experiments>3</experiments>
</comment>
<comment type="interaction">
    <interactant intactId="EBI-748621">
        <id>Q9UJW9</id>
    </interactant>
    <interactant intactId="EBI-349938">
        <id>P52292</id>
        <label>KPNA2</label>
    </interactant>
    <organismsDiffer>false</organismsDiffer>
    <experiments>4</experiments>
</comment>
<comment type="interaction">
    <interactant intactId="EBI-748621">
        <id>Q9UJW9</id>
    </interactant>
    <interactant intactId="EBI-11978579">
        <id>O95983-2</id>
        <label>MBD3</label>
    </interactant>
    <organismsDiffer>false</organismsDiffer>
    <experiments>3</experiments>
</comment>
<comment type="interaction">
    <interactant intactId="EBI-748621">
        <id>Q9UJW9</id>
    </interactant>
    <interactant intactId="EBI-394558">
        <id>Q71SY5</id>
        <label>MED25</label>
    </interactant>
    <organismsDiffer>false</organismsDiffer>
    <experiments>3</experiments>
</comment>
<comment type="interaction">
    <interactant intactId="EBI-748621">
        <id>Q9UJW9</id>
    </interactant>
    <interactant intactId="EBI-11991020">
        <id>A6NI15</id>
        <label>MSGN1</label>
    </interactant>
    <organismsDiffer>false</organismsDiffer>
    <experiments>3</experiments>
</comment>
<comment type="interaction">
    <interactant intactId="EBI-748621">
        <id>Q9UJW9</id>
    </interactant>
    <interactant intactId="EBI-747044">
        <id>P16860</id>
        <label>NPPB</label>
    </interactant>
    <organismsDiffer>false</organismsDiffer>
    <experiments>3</experiments>
</comment>
<comment type="interaction">
    <interactant intactId="EBI-748621">
        <id>Q9UJW9</id>
    </interactant>
    <interactant intactId="EBI-741048">
        <id>Q7Z3B4</id>
        <label>NUP54</label>
    </interactant>
    <organismsDiffer>false</organismsDiffer>
    <experiments>3</experiments>
</comment>
<comment type="interaction">
    <interactant intactId="EBI-748621">
        <id>Q9UJW9</id>
    </interactant>
    <interactant intactId="EBI-10181968">
        <id>Q7Z4N8</id>
        <label>P4HA3</label>
    </interactant>
    <organismsDiffer>false</organismsDiffer>
    <experiments>3</experiments>
</comment>
<comment type="interaction">
    <interactant intactId="EBI-748621">
        <id>Q9UJW9</id>
    </interactant>
    <interactant intactId="EBI-79165">
        <id>Q9NRD5</id>
        <label>PICK1</label>
    </interactant>
    <organismsDiffer>false</organismsDiffer>
    <experiments>3</experiments>
</comment>
<comment type="interaction">
    <interactant intactId="EBI-748621">
        <id>Q9UJW9</id>
    </interactant>
    <interactant intactId="EBI-602382">
        <id>Q16512</id>
        <label>PKN1</label>
    </interactant>
    <organismsDiffer>false</organismsDiffer>
    <experiments>3</experiments>
</comment>
<comment type="interaction">
    <interactant intactId="EBI-748621">
        <id>Q9UJW9</id>
    </interactant>
    <interactant intactId="EBI-1383852">
        <id>P54646</id>
        <label>PRKAA2</label>
    </interactant>
    <organismsDiffer>false</organismsDiffer>
    <experiments>3</experiments>
</comment>
<comment type="interaction">
    <interactant intactId="EBI-748621">
        <id>Q9UJW9</id>
    </interactant>
    <interactant intactId="EBI-621404">
        <id>P15927</id>
        <label>RPA2</label>
    </interactant>
    <organismsDiffer>false</organismsDiffer>
    <experiments>5</experiments>
</comment>
<comment type="interaction">
    <interactant intactId="EBI-748621">
        <id>Q9UJW9</id>
    </interactant>
    <interactant intactId="EBI-10217913">
        <id>Q14D33</id>
        <label>RTP5</label>
    </interactant>
    <organismsDiffer>false</organismsDiffer>
    <experiments>3</experiments>
</comment>
<comment type="interaction">
    <interactant intactId="EBI-748621">
        <id>Q9UJW9</id>
    </interactant>
    <interactant intactId="EBI-358489">
        <id>Q96GM5</id>
        <label>SMARCD1</label>
    </interactant>
    <organismsDiffer>false</organismsDiffer>
    <experiments>3</experiments>
</comment>
<comment type="interaction">
    <interactant intactId="EBI-748621">
        <id>Q9UJW9</id>
    </interactant>
    <interactant intactId="EBI-372475">
        <id>P14678-2</id>
        <label>SNRPB</label>
    </interactant>
    <organismsDiffer>false</organismsDiffer>
    <experiments>4</experiments>
</comment>
<comment type="interaction">
    <interactant intactId="EBI-748621">
        <id>Q9UJW9</id>
    </interactant>
    <interactant intactId="EBI-2822128">
        <id>Q96JI7</id>
        <label>SPG11</label>
    </interactant>
    <organismsDiffer>false</organismsDiffer>
    <experiments>3</experiments>
</comment>
<comment type="interaction">
    <interactant intactId="EBI-748621">
        <id>Q9UJW9</id>
    </interactant>
    <interactant intactId="EBI-12029182">
        <id>Q6ZRS2-3</id>
        <label>SRCAP</label>
    </interactant>
    <organismsDiffer>false</organismsDiffer>
    <experiments>3</experiments>
</comment>
<comment type="interaction">
    <interactant intactId="EBI-748621">
        <id>Q9UJW9</id>
    </interactant>
    <interactant intactId="EBI-3921347">
        <id>P51687</id>
        <label>SUOX</label>
    </interactant>
    <organismsDiffer>false</organismsDiffer>
    <experiments>5</experiments>
</comment>
<comment type="interaction">
    <interactant intactId="EBI-748621">
        <id>Q9UJW9</id>
    </interactant>
    <interactant intactId="EBI-745958">
        <id>Q5VWN6</id>
        <label>TASOR2</label>
    </interactant>
    <organismsDiffer>false</organismsDiffer>
    <experiments>3</experiments>
</comment>
<comment type="interaction">
    <interactant intactId="EBI-748621">
        <id>Q9UJW9</id>
    </interactant>
    <interactant intactId="EBI-11741437">
        <id>Q08117-2</id>
        <label>TLE5</label>
    </interactant>
    <organismsDiffer>false</organismsDiffer>
    <experiments>3</experiments>
</comment>
<comment type="interaction">
    <interactant intactId="EBI-748621">
        <id>Q9UJW9</id>
    </interactant>
    <interactant intactId="EBI-12076664">
        <id>O14787-2</id>
        <label>TNPO2</label>
    </interactant>
    <organismsDiffer>false</organismsDiffer>
    <experiments>3</experiments>
</comment>
<comment type="interaction">
    <interactant intactId="EBI-748621">
        <id>Q9UJW9</id>
    </interactant>
    <interactant intactId="EBI-14115717">
        <id>Q8N7U7-2</id>
        <label>TPRX1</label>
    </interactant>
    <organismsDiffer>false</organismsDiffer>
    <experiments>3</experiments>
</comment>
<comment type="interaction">
    <interactant intactId="EBI-748621">
        <id>Q9UJW9</id>
    </interactant>
    <interactant intactId="EBI-8451480">
        <id>O75865-2</id>
        <label>TRAPPC6A</label>
    </interactant>
    <organismsDiffer>false</organismsDiffer>
    <experiments>3</experiments>
</comment>
<comment type="interaction">
    <interactant intactId="EBI-748621">
        <id>Q9UJW9</id>
    </interactant>
    <interactant intactId="EBI-357881">
        <id>Q9BSJ2</id>
        <label>TUBGCP2</label>
    </interactant>
    <organismsDiffer>false</organismsDiffer>
    <experiments>3</experiments>
</comment>
<comment type="interaction">
    <interactant intactId="EBI-748621">
        <id>Q9UJW9</id>
    </interactant>
    <interactant intactId="EBI-594644">
        <id>P10599</id>
        <label>TXN</label>
    </interactant>
    <organismsDiffer>false</organismsDiffer>
    <experiments>3</experiments>
</comment>
<comment type="interaction">
    <interactant intactId="EBI-748621">
        <id>Q9UJW9</id>
    </interactant>
    <interactant intactId="EBI-607755">
        <id>Q9BZL1</id>
        <label>UBL5</label>
    </interactant>
    <organismsDiffer>false</organismsDiffer>
    <experiments>4</experiments>
</comment>
<comment type="interaction">
    <interactant intactId="EBI-748621">
        <id>Q9UJW9</id>
    </interactant>
    <interactant intactId="EBI-739895">
        <id>Q8N6Y0</id>
        <label>USHBP1</label>
    </interactant>
    <organismsDiffer>false</organismsDiffer>
    <experiments>7</experiments>
</comment>
<comment type="interaction">
    <interactant intactId="EBI-748621">
        <id>Q9UJW9</id>
    </interactant>
    <interactant intactId="EBI-953824">
        <id>Q96DA0</id>
        <label>ZG16B</label>
    </interactant>
    <organismsDiffer>false</organismsDiffer>
    <experiments>5</experiments>
</comment>
<comment type="interaction">
    <interactant intactId="EBI-748621">
        <id>Q9UJW9</id>
    </interactant>
    <interactant intactId="EBI-10183064">
        <id>Q8N5A5-2</id>
        <label>ZGPAT</label>
    </interactant>
    <organismsDiffer>false</organismsDiffer>
    <experiments>3</experiments>
</comment>
<comment type="subcellular location">
    <subcellularLocation>
        <location evidence="4">Nucleus</location>
    </subcellularLocation>
</comment>
<accession>Q9UJW9</accession>
<accession>B3KQB3</accession>
<accession>Q96CQ2</accession>
<gene>
    <name type="primary">SERTAD3</name>
    <name type="synonym">RBT1</name>
</gene>
<proteinExistence type="evidence at protein level"/>
<protein>
    <recommendedName>
        <fullName>SERTA domain-containing protein 3</fullName>
    </recommendedName>
    <alternativeName>
        <fullName>Replication protein-binding trans-activator</fullName>
        <shortName>RPA-binding trans-activator</shortName>
    </alternativeName>
</protein>
<organism>
    <name type="scientific">Homo sapiens</name>
    <name type="common">Human</name>
    <dbReference type="NCBI Taxonomy" id="9606"/>
    <lineage>
        <taxon>Eukaryota</taxon>
        <taxon>Metazoa</taxon>
        <taxon>Chordata</taxon>
        <taxon>Craniata</taxon>
        <taxon>Vertebrata</taxon>
        <taxon>Euteleostomi</taxon>
        <taxon>Mammalia</taxon>
        <taxon>Eutheria</taxon>
        <taxon>Euarchontoglires</taxon>
        <taxon>Primates</taxon>
        <taxon>Haplorrhini</taxon>
        <taxon>Catarrhini</taxon>
        <taxon>Hominidae</taxon>
        <taxon>Homo</taxon>
    </lineage>
</organism>
<name>SRTD3_HUMAN</name>